<protein>
    <recommendedName>
        <fullName evidence="5">Transcription factor IBH1</fullName>
        <shortName evidence="5">OsIBH1</shortName>
    </recommendedName>
    <alternativeName>
        <fullName evidence="6">Basic helix-loop-helix protein 175</fullName>
        <shortName evidence="6">OsbHLH175</shortName>
    </alternativeName>
    <alternativeName>
        <fullName evidence="5">Protein ILI1-BINDING BHLH 1</fullName>
    </alternativeName>
    <alternativeName>
        <fullName evidence="6">bHLH transcription factor bHLH175</fullName>
    </alternativeName>
</protein>
<evidence type="ECO:0000256" key="1">
    <source>
        <dbReference type="SAM" id="MobiDB-lite"/>
    </source>
</evidence>
<evidence type="ECO:0000269" key="2">
    <source>
    </source>
</evidence>
<evidence type="ECO:0000269" key="3">
    <source>
    </source>
</evidence>
<evidence type="ECO:0000269" key="4">
    <source>
    </source>
</evidence>
<evidence type="ECO:0000303" key="5">
    <source>
    </source>
</evidence>
<evidence type="ECO:0000303" key="6">
    <source>
    </source>
</evidence>
<evidence type="ECO:0000305" key="7"/>
<evidence type="ECO:0000305" key="8">
    <source>
    </source>
</evidence>
<evidence type="ECO:0000312" key="9">
    <source>
        <dbReference type="EMBL" id="CAE02894.2"/>
    </source>
</evidence>
<keyword id="KW-1070">Brassinosteroid signaling pathway</keyword>
<keyword id="KW-0341">Growth regulation</keyword>
<keyword id="KW-1185">Reference proteome</keyword>
<keyword id="KW-0804">Transcription</keyword>
<keyword id="KW-0805">Transcription regulation</keyword>
<gene>
    <name evidence="5" type="primary">IBH1</name>
    <name evidence="6" type="synonym">BHLH175</name>
    <name evidence="7" type="ordered locus">Os04g0660100</name>
    <name evidence="7" type="ordered locus">LOC_Os04g56500</name>
    <name evidence="9" type="ORF">OSJNBa0015K02.11</name>
</gene>
<sequence>MDAKRTPPPPTPPNPNPSVIGSGAAADGGGFGRGEAAAATKHMLAFHFLRALSRIHRATPVTRRTRTIRRAAYSSMARAASPRRAWSRALLGQVRARRSRTLMRRAAVLVRRRVVAAPAPSPASARGVRIIAAGETSAAARAVPPPPRQQGEPPRAEALRRLVPGGAGMEYSSLLEETADYLRSLRAQVQLMQGLVDLFSYQ</sequence>
<reference key="1">
    <citation type="journal article" date="2002" name="Nature">
        <title>Sequence and analysis of rice chromosome 4.</title>
        <authorList>
            <person name="Feng Q."/>
            <person name="Zhang Y."/>
            <person name="Hao P."/>
            <person name="Wang S."/>
            <person name="Fu G."/>
            <person name="Huang Y."/>
            <person name="Li Y."/>
            <person name="Zhu J."/>
            <person name="Liu Y."/>
            <person name="Hu X."/>
            <person name="Jia P."/>
            <person name="Zhang Y."/>
            <person name="Zhao Q."/>
            <person name="Ying K."/>
            <person name="Yu S."/>
            <person name="Tang Y."/>
            <person name="Weng Q."/>
            <person name="Zhang L."/>
            <person name="Lu Y."/>
            <person name="Mu J."/>
            <person name="Lu Y."/>
            <person name="Zhang L.S."/>
            <person name="Yu Z."/>
            <person name="Fan D."/>
            <person name="Liu X."/>
            <person name="Lu T."/>
            <person name="Li C."/>
            <person name="Wu Y."/>
            <person name="Sun T."/>
            <person name="Lei H."/>
            <person name="Li T."/>
            <person name="Hu H."/>
            <person name="Guan J."/>
            <person name="Wu M."/>
            <person name="Zhang R."/>
            <person name="Zhou B."/>
            <person name="Chen Z."/>
            <person name="Chen L."/>
            <person name="Jin Z."/>
            <person name="Wang R."/>
            <person name="Yin H."/>
            <person name="Cai Z."/>
            <person name="Ren S."/>
            <person name="Lv G."/>
            <person name="Gu W."/>
            <person name="Zhu G."/>
            <person name="Tu Y."/>
            <person name="Jia J."/>
            <person name="Zhang Y."/>
            <person name="Chen J."/>
            <person name="Kang H."/>
            <person name="Chen X."/>
            <person name="Shao C."/>
            <person name="Sun Y."/>
            <person name="Hu Q."/>
            <person name="Zhang X."/>
            <person name="Zhang W."/>
            <person name="Wang L."/>
            <person name="Ding C."/>
            <person name="Sheng H."/>
            <person name="Gu J."/>
            <person name="Chen S."/>
            <person name="Ni L."/>
            <person name="Zhu F."/>
            <person name="Chen W."/>
            <person name="Lan L."/>
            <person name="Lai Y."/>
            <person name="Cheng Z."/>
            <person name="Gu M."/>
            <person name="Jiang J."/>
            <person name="Li J."/>
            <person name="Hong G."/>
            <person name="Xue Y."/>
            <person name="Han B."/>
        </authorList>
    </citation>
    <scope>NUCLEOTIDE SEQUENCE [LARGE SCALE GENOMIC DNA]</scope>
    <source>
        <strain>cv. Nipponbare</strain>
    </source>
</reference>
<reference key="2">
    <citation type="journal article" date="2005" name="Nature">
        <title>The map-based sequence of the rice genome.</title>
        <authorList>
            <consortium name="International rice genome sequencing project (IRGSP)"/>
        </authorList>
    </citation>
    <scope>NUCLEOTIDE SEQUENCE [LARGE SCALE GENOMIC DNA]</scope>
    <source>
        <strain>cv. Nipponbare</strain>
    </source>
</reference>
<reference key="3">
    <citation type="journal article" date="2008" name="Nucleic Acids Res.">
        <title>The rice annotation project database (RAP-DB): 2008 update.</title>
        <authorList>
            <consortium name="The rice annotation project (RAP)"/>
        </authorList>
    </citation>
    <scope>GENOME REANNOTATION</scope>
    <source>
        <strain>cv. Nipponbare</strain>
    </source>
</reference>
<reference key="4">
    <citation type="journal article" date="2013" name="Rice">
        <title>Improvement of the Oryza sativa Nipponbare reference genome using next generation sequence and optical map data.</title>
        <authorList>
            <person name="Kawahara Y."/>
            <person name="de la Bastide M."/>
            <person name="Hamilton J.P."/>
            <person name="Kanamori H."/>
            <person name="McCombie W.R."/>
            <person name="Ouyang S."/>
            <person name="Schwartz D.C."/>
            <person name="Tanaka T."/>
            <person name="Wu J."/>
            <person name="Zhou S."/>
            <person name="Childs K.L."/>
            <person name="Davidson R.M."/>
            <person name="Lin H."/>
            <person name="Quesada-Ocampo L."/>
            <person name="Vaillancourt B."/>
            <person name="Sakai H."/>
            <person name="Lee S.S."/>
            <person name="Kim J."/>
            <person name="Numa H."/>
            <person name="Itoh T."/>
            <person name="Buell C.R."/>
            <person name="Matsumoto T."/>
        </authorList>
    </citation>
    <scope>GENOME REANNOTATION</scope>
    <source>
        <strain>cv. Nipponbare</strain>
    </source>
</reference>
<reference key="5">
    <citation type="journal article" date="2003" name="Science">
        <title>Collection, mapping, and annotation of over 28,000 cDNA clones from japonica rice.</title>
        <authorList>
            <consortium name="The rice full-length cDNA consortium"/>
        </authorList>
    </citation>
    <scope>NUCLEOTIDE SEQUENCE [LARGE SCALE MRNA]</scope>
    <source>
        <strain>cv. Nipponbare</strain>
    </source>
</reference>
<reference key="6">
    <citation type="journal article" date="2009" name="Plant Cell">
        <title>Antagonistic HLH/bHLH transcription factors mediate brassinosteroid regulation of cell elongation and plant development in rice and Arabidopsis.</title>
        <authorList>
            <person name="Zhang L.Y."/>
            <person name="Bai M.Y."/>
            <person name="Wu J."/>
            <person name="Zhu J.Y."/>
            <person name="Wang H."/>
            <person name="Zhang Z."/>
            <person name="Wang W."/>
            <person name="Sun Y."/>
            <person name="Zhao J."/>
            <person name="Sun X."/>
            <person name="Yang H."/>
            <person name="Xu Y."/>
            <person name="Kim S.H."/>
            <person name="Fujioka S."/>
            <person name="Lin W.H."/>
            <person name="Chong K."/>
            <person name="Lu T."/>
            <person name="Wang Z.Y."/>
        </authorList>
    </citation>
    <scope>FUNCTION</scope>
    <scope>INTERACTION WITH ILI1</scope>
    <scope>TISSUE SPECIFICITY</scope>
</reference>
<reference key="7">
    <citation type="journal article" date="2010" name="Plant Physiol.">
        <title>Genome-wide classification and evolutionary analysis of the bHLH family of transcription factors in Arabidopsis, poplar, rice, moss, and algae.</title>
        <authorList>
            <person name="Carretero-Paulet L."/>
            <person name="Galstyan A."/>
            <person name="Roig-Villanova I."/>
            <person name="Martinez-Garcia J.F."/>
            <person name="Bilbao-Castro J.R."/>
            <person name="Robertson D.L."/>
        </authorList>
    </citation>
    <scope>GENE FAMILY</scope>
    <scope>NOMENCLATURE</scope>
</reference>
<reference key="8">
    <citation type="journal article" date="2017" name="Plant Physiol.">
        <title>Rice leaf angle and grain size are affected by the OsBUL1 transcriptional activator complex.</title>
        <authorList>
            <person name="Jang S."/>
            <person name="An G."/>
            <person name="Li H.-Y."/>
        </authorList>
    </citation>
    <scope>INTERACTION WITH ILI5/BUL1 AND BC1</scope>
</reference>
<reference key="9">
    <citation type="journal article" date="2021" name="Int. J. Mol. Sci.">
        <title>Modulation of Rice Leaf Angle and Grain Size by Expressing OsBCL1 and OsBCL2 under the Control of OsBUL1 Promoter.</title>
        <authorList>
            <person name="Jang S."/>
            <person name="Cho J.-Y."/>
            <person name="Do G.-R."/>
            <person name="Kang Y."/>
            <person name="Li H.-Y."/>
            <person name="Song J."/>
            <person name="Kim H.-Y."/>
            <person name="Kim B.-G."/>
            <person name="Hsing Y.-I."/>
        </authorList>
    </citation>
    <scope>INTERACTION WITH BCL1 AND BCL2</scope>
    <source>
        <strain>cv. Tainung 67</strain>
    </source>
</reference>
<comment type="function">
    <text evidence="2">Atypical and probable non DNA-binding bHLH transcription factor that acts as a negative regulator of cell elongation and plant development. Binds the transcription factor ILI1 and forms a heterodimer of antagonistic bHLH transcription factors that function downstream of BZR1 to mediate brassinosteroid regulation of cell elongation and lamina inclination.</text>
</comment>
<comment type="subunit">
    <text evidence="2 3 4">Interacts with ILI1 (PubMed:20009022). Binds to ILI5/BUL1 and BC1 (PubMed:27879391). Interacts with BCL1 and BCL2 (PubMed:34360554).</text>
</comment>
<comment type="tissue specificity">
    <text evidence="2">Highly expressed in roots and at lower levels in leaf blades, leaf sheaths, lamina joint, stems and panicles.</text>
</comment>
<comment type="induction">
    <text>Repressed by epibrassinolide.</text>
</comment>
<comment type="miscellaneous">
    <text evidence="8">Plants over-expressing IBH1 show erect leaves with reduced angles of inclination.</text>
</comment>
<comment type="similarity">
    <text>Belongs to the bHLH protein family.</text>
</comment>
<proteinExistence type="evidence at protein level"/>
<organism>
    <name type="scientific">Oryza sativa subsp. japonica</name>
    <name type="common">Rice</name>
    <dbReference type="NCBI Taxonomy" id="39947"/>
    <lineage>
        <taxon>Eukaryota</taxon>
        <taxon>Viridiplantae</taxon>
        <taxon>Streptophyta</taxon>
        <taxon>Embryophyta</taxon>
        <taxon>Tracheophyta</taxon>
        <taxon>Spermatophyta</taxon>
        <taxon>Magnoliopsida</taxon>
        <taxon>Liliopsida</taxon>
        <taxon>Poales</taxon>
        <taxon>Poaceae</taxon>
        <taxon>BOP clade</taxon>
        <taxon>Oryzoideae</taxon>
        <taxon>Oryzeae</taxon>
        <taxon>Oryzinae</taxon>
        <taxon>Oryza</taxon>
        <taxon>Oryza sativa</taxon>
    </lineage>
</organism>
<feature type="chain" id="PRO_0000429102" description="Transcription factor IBH1">
    <location>
        <begin position="1"/>
        <end position="202"/>
    </location>
</feature>
<feature type="domain" description="bHLH">
    <location>
        <begin position="136"/>
        <end position="185"/>
    </location>
</feature>
<feature type="region of interest" description="Disordered" evidence="1">
    <location>
        <begin position="1"/>
        <end position="33"/>
    </location>
</feature>
<feature type="compositionally biased region" description="Pro residues" evidence="1">
    <location>
        <begin position="1"/>
        <end position="16"/>
    </location>
</feature>
<accession>Q7XR02</accession>
<accession>A0A0P0WFY9</accession>
<dbReference type="EMBL" id="AL606608">
    <property type="protein sequence ID" value="CAE02894.2"/>
    <property type="molecule type" value="Genomic_DNA"/>
</dbReference>
<dbReference type="EMBL" id="AP008210">
    <property type="protein sequence ID" value="BAF16055.1"/>
    <property type="molecule type" value="Genomic_DNA"/>
</dbReference>
<dbReference type="EMBL" id="AP014960">
    <property type="protein sequence ID" value="BAS91444.1"/>
    <property type="molecule type" value="Genomic_DNA"/>
</dbReference>
<dbReference type="EMBL" id="AK109923">
    <property type="protein sequence ID" value="BAG98961.1"/>
    <property type="molecule type" value="mRNA"/>
</dbReference>
<dbReference type="RefSeq" id="XP_015633566.1">
    <property type="nucleotide sequence ID" value="XM_015778080.1"/>
</dbReference>
<dbReference type="SMR" id="Q7XR02"/>
<dbReference type="FunCoup" id="Q7XR02">
    <property type="interactions" value="751"/>
</dbReference>
<dbReference type="STRING" id="39947.Q7XR02"/>
<dbReference type="PaxDb" id="39947-Q7XR02"/>
<dbReference type="EnsemblPlants" id="Os04t0660100-01">
    <property type="protein sequence ID" value="Os04t0660100-01"/>
    <property type="gene ID" value="Os04g0660100"/>
</dbReference>
<dbReference type="Gramene" id="Os04t0660100-01">
    <property type="protein sequence ID" value="Os04t0660100-01"/>
    <property type="gene ID" value="Os04g0660100"/>
</dbReference>
<dbReference type="KEGG" id="dosa:Os04g0660100"/>
<dbReference type="eggNOG" id="ENOG502S9NU">
    <property type="taxonomic scope" value="Eukaryota"/>
</dbReference>
<dbReference type="InParanoid" id="Q7XR02"/>
<dbReference type="OMA" id="KHMLAFH"/>
<dbReference type="OrthoDB" id="786845at2759"/>
<dbReference type="PlantReactome" id="R-OSA-5632095">
    <property type="pathway name" value="Brassinosteroid signaling"/>
</dbReference>
<dbReference type="Proteomes" id="UP000000763">
    <property type="component" value="Chromosome 4"/>
</dbReference>
<dbReference type="Proteomes" id="UP000059680">
    <property type="component" value="Chromosome 4"/>
</dbReference>
<dbReference type="ExpressionAtlas" id="Q7XR02">
    <property type="expression patterns" value="baseline and differential"/>
</dbReference>
<dbReference type="GO" id="GO:0009742">
    <property type="term" value="P:brassinosteroid mediated signaling pathway"/>
    <property type="evidence" value="ECO:0007669"/>
    <property type="project" value="UniProtKB-KW"/>
</dbReference>
<dbReference type="GO" id="GO:0006355">
    <property type="term" value="P:regulation of DNA-templated transcription"/>
    <property type="evidence" value="ECO:0007669"/>
    <property type="project" value="InterPro"/>
</dbReference>
<dbReference type="GO" id="GO:0009741">
    <property type="term" value="P:response to brassinosteroid"/>
    <property type="evidence" value="ECO:0000270"/>
    <property type="project" value="UniProtKB"/>
</dbReference>
<dbReference type="GO" id="GO:0009826">
    <property type="term" value="P:unidimensional cell growth"/>
    <property type="evidence" value="ECO:0000315"/>
    <property type="project" value="UniProtKB"/>
</dbReference>
<dbReference type="InterPro" id="IPR044660">
    <property type="entry name" value="IBH1-like"/>
</dbReference>
<dbReference type="PANTHER" id="PTHR33124:SF40">
    <property type="entry name" value="TRANSCRIPTION FACTOR IBH1"/>
    <property type="match status" value="1"/>
</dbReference>
<dbReference type="PANTHER" id="PTHR33124">
    <property type="entry name" value="TRANSCRIPTION FACTOR IBH1-LIKE 1"/>
    <property type="match status" value="1"/>
</dbReference>
<name>IBH1_ORYSJ</name>